<name>SUMO3_RAT</name>
<evidence type="ECO:0000250" key="1"/>
<evidence type="ECO:0000250" key="2">
    <source>
        <dbReference type="UniProtKB" id="P55854"/>
    </source>
</evidence>
<evidence type="ECO:0000255" key="3">
    <source>
        <dbReference type="PROSITE-ProRule" id="PRU00214"/>
    </source>
</evidence>
<evidence type="ECO:0000256" key="4">
    <source>
        <dbReference type="SAM" id="MobiDB-lite"/>
    </source>
</evidence>
<evidence type="ECO:0000305" key="5"/>
<dbReference type="EMBL" id="BC083728">
    <property type="protein sequence ID" value="AAH83728.1"/>
    <property type="molecule type" value="mRNA"/>
</dbReference>
<dbReference type="RefSeq" id="NP_001019466.1">
    <property type="nucleotide sequence ID" value="NM_001024295.2"/>
</dbReference>
<dbReference type="BMRB" id="Q5XIF4"/>
<dbReference type="SMR" id="Q5XIF4"/>
<dbReference type="BioGRID" id="270726">
    <property type="interactions" value="189"/>
</dbReference>
<dbReference type="FunCoup" id="Q5XIF4">
    <property type="interactions" value="3400"/>
</dbReference>
<dbReference type="STRING" id="10116.ENSRNOP00000001637"/>
<dbReference type="GlyGen" id="Q5XIF4">
    <property type="glycosylation" value="1 site"/>
</dbReference>
<dbReference type="iPTMnet" id="Q5XIF4"/>
<dbReference type="PhosphoSitePlus" id="Q5XIF4"/>
<dbReference type="jPOST" id="Q5XIF4"/>
<dbReference type="PaxDb" id="10116-ENSRNOP00000001637"/>
<dbReference type="GeneID" id="499417"/>
<dbReference type="KEGG" id="rno:499417"/>
<dbReference type="UCSC" id="RGD:1561022">
    <property type="organism name" value="rat"/>
</dbReference>
<dbReference type="AGR" id="RGD:1561022"/>
<dbReference type="CTD" id="6612"/>
<dbReference type="RGD" id="1561022">
    <property type="gene designation" value="Sumo3"/>
</dbReference>
<dbReference type="eggNOG" id="KOG1769">
    <property type="taxonomic scope" value="Eukaryota"/>
</dbReference>
<dbReference type="HOGENOM" id="CLU_148322_2_1_1"/>
<dbReference type="InParanoid" id="Q5XIF4"/>
<dbReference type="OrthoDB" id="9925208at2759"/>
<dbReference type="PhylomeDB" id="Q5XIF4"/>
<dbReference type="TreeFam" id="TF315116"/>
<dbReference type="Reactome" id="R-RNO-3065679">
    <property type="pathway name" value="SUMO is proteolytically processed"/>
</dbReference>
<dbReference type="Reactome" id="R-RNO-3108214">
    <property type="pathway name" value="SUMOylation of DNA damage response and repair proteins"/>
</dbReference>
<dbReference type="Reactome" id="R-RNO-3232118">
    <property type="pathway name" value="SUMOylation of transcription factors"/>
</dbReference>
<dbReference type="Reactome" id="R-RNO-3899300">
    <property type="pathway name" value="SUMOylation of transcription cofactors"/>
</dbReference>
<dbReference type="Reactome" id="R-RNO-4090294">
    <property type="pathway name" value="SUMOylation of intracellular receptors"/>
</dbReference>
<dbReference type="Reactome" id="R-RNO-4551638">
    <property type="pathway name" value="SUMOylation of chromatin organization proteins"/>
</dbReference>
<dbReference type="Reactome" id="R-RNO-4615885">
    <property type="pathway name" value="SUMOylation of DNA replication proteins"/>
</dbReference>
<dbReference type="Reactome" id="R-RNO-4755510">
    <property type="pathway name" value="SUMOylation of immune response proteins"/>
</dbReference>
<dbReference type="Reactome" id="R-RNO-5696395">
    <property type="pathway name" value="Formation of Incision Complex in GG-NER"/>
</dbReference>
<dbReference type="PRO" id="PR:Q5XIF4"/>
<dbReference type="Proteomes" id="UP000002494">
    <property type="component" value="Chromosome 20"/>
</dbReference>
<dbReference type="Bgee" id="ENSRNOG00000038489">
    <property type="expression patterns" value="Expressed in ovary and 19 other cell types or tissues"/>
</dbReference>
<dbReference type="GO" id="GO:0098978">
    <property type="term" value="C:glutamatergic synapse"/>
    <property type="evidence" value="ECO:0000266"/>
    <property type="project" value="RGD"/>
</dbReference>
<dbReference type="GO" id="GO:0016604">
    <property type="term" value="C:nuclear body"/>
    <property type="evidence" value="ECO:0000266"/>
    <property type="project" value="RGD"/>
</dbReference>
<dbReference type="GO" id="GO:0005634">
    <property type="term" value="C:nucleus"/>
    <property type="evidence" value="ECO:0000266"/>
    <property type="project" value="RGD"/>
</dbReference>
<dbReference type="GO" id="GO:0016605">
    <property type="term" value="C:PML body"/>
    <property type="evidence" value="ECO:0000250"/>
    <property type="project" value="UniProtKB"/>
</dbReference>
<dbReference type="GO" id="GO:0099524">
    <property type="term" value="C:postsynaptic cytosol"/>
    <property type="evidence" value="ECO:0000266"/>
    <property type="project" value="RGD"/>
</dbReference>
<dbReference type="GO" id="GO:0099523">
    <property type="term" value="C:presynaptic cytosol"/>
    <property type="evidence" value="ECO:0000266"/>
    <property type="project" value="RGD"/>
</dbReference>
<dbReference type="GO" id="GO:0031386">
    <property type="term" value="F:protein tag activity"/>
    <property type="evidence" value="ECO:0000318"/>
    <property type="project" value="GO_Central"/>
</dbReference>
<dbReference type="GO" id="GO:0019789">
    <property type="term" value="F:SUMO transferase activity"/>
    <property type="evidence" value="ECO:0000266"/>
    <property type="project" value="RGD"/>
</dbReference>
<dbReference type="GO" id="GO:0044389">
    <property type="term" value="F:ubiquitin-like protein ligase binding"/>
    <property type="evidence" value="ECO:0000318"/>
    <property type="project" value="GO_Central"/>
</dbReference>
<dbReference type="GO" id="GO:2000060">
    <property type="term" value="P:positive regulation of ubiquitin-dependent protein catabolic process"/>
    <property type="evidence" value="ECO:0000266"/>
    <property type="project" value="RGD"/>
</dbReference>
<dbReference type="GO" id="GO:0034504">
    <property type="term" value="P:protein localization to nucleus"/>
    <property type="evidence" value="ECO:0000266"/>
    <property type="project" value="RGD"/>
</dbReference>
<dbReference type="GO" id="GO:0016925">
    <property type="term" value="P:protein sumoylation"/>
    <property type="evidence" value="ECO:0000250"/>
    <property type="project" value="UniProtKB"/>
</dbReference>
<dbReference type="GO" id="GO:1900180">
    <property type="term" value="P:regulation of protein localization to nucleus"/>
    <property type="evidence" value="ECO:0000266"/>
    <property type="project" value="RGD"/>
</dbReference>
<dbReference type="CDD" id="cd16115">
    <property type="entry name" value="Ubl_SUMO2_3_4"/>
    <property type="match status" value="1"/>
</dbReference>
<dbReference type="FunFam" id="3.10.20.90:FF:000022">
    <property type="entry name" value="Small ubiquitin-related modifier"/>
    <property type="match status" value="1"/>
</dbReference>
<dbReference type="Gene3D" id="3.10.20.90">
    <property type="entry name" value="Phosphatidylinositol 3-kinase Catalytic Subunit, Chain A, domain 1"/>
    <property type="match status" value="1"/>
</dbReference>
<dbReference type="InterPro" id="IPR022617">
    <property type="entry name" value="Rad60/SUMO-like_dom"/>
</dbReference>
<dbReference type="InterPro" id="IPR000626">
    <property type="entry name" value="Ubiquitin-like_dom"/>
</dbReference>
<dbReference type="InterPro" id="IPR029071">
    <property type="entry name" value="Ubiquitin-like_domsf"/>
</dbReference>
<dbReference type="PANTHER" id="PTHR10562">
    <property type="entry name" value="SMALL UBIQUITIN-RELATED MODIFIER"/>
    <property type="match status" value="1"/>
</dbReference>
<dbReference type="Pfam" id="PF11976">
    <property type="entry name" value="Rad60-SLD"/>
    <property type="match status" value="1"/>
</dbReference>
<dbReference type="SMART" id="SM00213">
    <property type="entry name" value="UBQ"/>
    <property type="match status" value="1"/>
</dbReference>
<dbReference type="SUPFAM" id="SSF54236">
    <property type="entry name" value="Ubiquitin-like"/>
    <property type="match status" value="1"/>
</dbReference>
<dbReference type="PROSITE" id="PS50053">
    <property type="entry name" value="UBIQUITIN_2"/>
    <property type="match status" value="1"/>
</dbReference>
<comment type="function">
    <text evidence="2">Ubiquitin-like protein which can be covalently attached to target lysines either as a monomer or as a lysine-linked polymer. Does not seem to be involved in protein degradation and may function as an antagonist of ubiquitin in the degradation process. Plays a role in a number of cellular processes such as nuclear transport, DNA replication and repair, mitosis and signal transduction. Covalent attachment to its substrates requires prior activation by the E1 complex SAE1-SAE2 and linkage to the E2 enzyme UBE2I, and can be promoted by an E3 ligase such as PIAS1-4, RANBP2 or CBX4. Plays a role in the regulation of sumoylation status of SETX (By similarity).</text>
</comment>
<comment type="subunit">
    <text evidence="1">Interacts with SAE2 and UBE2I. Covalently attached to a number of proteins. Interacts with USP25 (via ts SIM domain); the interaction sumoylates USP25 and inhibits its ubiquitin hydrolyzing activity. Interacts with BMAL1 (By similarity).</text>
</comment>
<comment type="subcellular location">
    <subcellularLocation>
        <location evidence="1">Cytoplasm</location>
    </subcellularLocation>
    <subcellularLocation>
        <location evidence="1">Nucleus</location>
    </subcellularLocation>
    <subcellularLocation>
        <location evidence="1">Nucleus</location>
        <location evidence="1">PML body</location>
    </subcellularLocation>
</comment>
<comment type="PTM">
    <text evidence="1">Polymeric chains can be formed through Lys-11 cross-linking.</text>
</comment>
<comment type="PTM">
    <text evidence="1">Cleavage of precursor form by SENP1, SENP2 or SENP5 is necessary for function.</text>
</comment>
<comment type="similarity">
    <text evidence="5">Belongs to the ubiquitin family. SUMO subfamily.</text>
</comment>
<feature type="chain" id="PRO_0000267626" description="Small ubiquitin-related modifier 3">
    <location>
        <begin position="1"/>
        <end position="92"/>
    </location>
</feature>
<feature type="propeptide" id="PRO_0000267627" evidence="1">
    <location>
        <begin position="93"/>
        <end position="110"/>
    </location>
</feature>
<feature type="domain" description="Ubiquitin-like" evidence="3">
    <location>
        <begin position="15"/>
        <end position="92"/>
    </location>
</feature>
<feature type="region of interest" description="Disordered" evidence="4">
    <location>
        <begin position="89"/>
        <end position="110"/>
    </location>
</feature>
<feature type="compositionally biased region" description="Polar residues" evidence="4">
    <location>
        <begin position="89"/>
        <end position="101"/>
    </location>
</feature>
<feature type="cross-link" description="Glycyl lysine isopeptide (Lys-Gly) (interchain with G-Cter in SUMO2)" evidence="2">
    <location>
        <position position="5"/>
    </location>
</feature>
<feature type="cross-link" description="Glycyl lysine isopeptide (Lys-Gly) (interchain with G-Cter in SUMO2)" evidence="2">
    <location>
        <position position="7"/>
    </location>
</feature>
<feature type="cross-link" description="Glycyl lysine isopeptide (Lys-Gly) (interchain with G-Cter in SUMO); alternate" evidence="1">
    <location>
        <position position="11"/>
    </location>
</feature>
<feature type="cross-link" description="Glycyl lysine isopeptide (Lys-Gly) (interchain with G-Cter in SUMO2); alternate" evidence="2">
    <location>
        <position position="11"/>
    </location>
</feature>
<feature type="cross-link" description="Glycyl lysine isopeptide (Gly-Lys) (interchain with K-? in acceptor proteins)" evidence="3">
    <location>
        <position position="92"/>
    </location>
</feature>
<gene>
    <name type="primary">Sumo3</name>
</gene>
<keyword id="KW-0963">Cytoplasm</keyword>
<keyword id="KW-1017">Isopeptide bond</keyword>
<keyword id="KW-0539">Nucleus</keyword>
<keyword id="KW-1185">Reference proteome</keyword>
<keyword id="KW-0832">Ubl conjugation</keyword>
<keyword id="KW-0833">Ubl conjugation pathway</keyword>
<accession>Q5XIF4</accession>
<organism>
    <name type="scientific">Rattus norvegicus</name>
    <name type="common">Rat</name>
    <dbReference type="NCBI Taxonomy" id="10116"/>
    <lineage>
        <taxon>Eukaryota</taxon>
        <taxon>Metazoa</taxon>
        <taxon>Chordata</taxon>
        <taxon>Craniata</taxon>
        <taxon>Vertebrata</taxon>
        <taxon>Euteleostomi</taxon>
        <taxon>Mammalia</taxon>
        <taxon>Eutheria</taxon>
        <taxon>Euarchontoglires</taxon>
        <taxon>Glires</taxon>
        <taxon>Rodentia</taxon>
        <taxon>Myomorpha</taxon>
        <taxon>Muroidea</taxon>
        <taxon>Muridae</taxon>
        <taxon>Murinae</taxon>
        <taxon>Rattus</taxon>
    </lineage>
</organism>
<proteinExistence type="inferred from homology"/>
<reference key="1">
    <citation type="journal article" date="2004" name="Genome Res.">
        <title>The status, quality, and expansion of the NIH full-length cDNA project: the Mammalian Gene Collection (MGC).</title>
        <authorList>
            <consortium name="The MGC Project Team"/>
        </authorList>
    </citation>
    <scope>NUCLEOTIDE SEQUENCE [LARGE SCALE MRNA]</scope>
    <source>
        <tissue>Heart</tissue>
    </source>
</reference>
<sequence length="110" mass="12456">MSEEKPKEGVKTENDHINLKVAGQDGSVVQFKIKRHTPLSKLMKAYCERQGLSMRQIRFRFDGQPINETDTPAQLEMEDEDTIDVFQQQTGGTASRASVPTPSHFPDICY</sequence>
<protein>
    <recommendedName>
        <fullName evidence="5">Small ubiquitin-related modifier 3</fullName>
        <shortName evidence="5">SUMO-3</shortName>
    </recommendedName>
</protein>